<name>PIMT_GLOVI</name>
<protein>
    <recommendedName>
        <fullName evidence="1">Protein-L-isoaspartate O-methyltransferase</fullName>
        <ecNumber evidence="1">2.1.1.77</ecNumber>
    </recommendedName>
    <alternativeName>
        <fullName evidence="1">L-isoaspartyl protein carboxyl methyltransferase</fullName>
    </alternativeName>
    <alternativeName>
        <fullName evidence="1">Protein L-isoaspartyl methyltransferase</fullName>
    </alternativeName>
    <alternativeName>
        <fullName evidence="1">Protein-beta-aspartate methyltransferase</fullName>
        <shortName evidence="1">PIMT</shortName>
    </alternativeName>
</protein>
<sequence length="205" mass="22643">MVDEQLRPRGVEAQAVLAAMAKVPRHRFVPPPYTRLAYEDRPLPIGHSQTISQPFIVAYMSEAARITPGAKVLEIGTGSGYQAAVLAEMGAEVYTVEIVPELAKRAERTLEELGYRSVRVRSGDGYQGWPQHAPFDAIVVTAAPERIPQPLIDQLAVNGRLIVPVGTQTEDQRMTVLTRTPGGIVEQKTFPVRFVPLTREKPQEH</sequence>
<comment type="function">
    <text evidence="1">Catalyzes the methyl esterification of L-isoaspartyl residues in peptides and proteins that result from spontaneous decomposition of normal L-aspartyl and L-asparaginyl residues. It plays a role in the repair and/or degradation of damaged proteins.</text>
</comment>
<comment type="catalytic activity">
    <reaction evidence="1">
        <text>[protein]-L-isoaspartate + S-adenosyl-L-methionine = [protein]-L-isoaspartate alpha-methyl ester + S-adenosyl-L-homocysteine</text>
        <dbReference type="Rhea" id="RHEA:12705"/>
        <dbReference type="Rhea" id="RHEA-COMP:12143"/>
        <dbReference type="Rhea" id="RHEA-COMP:12144"/>
        <dbReference type="ChEBI" id="CHEBI:57856"/>
        <dbReference type="ChEBI" id="CHEBI:59789"/>
        <dbReference type="ChEBI" id="CHEBI:90596"/>
        <dbReference type="ChEBI" id="CHEBI:90598"/>
        <dbReference type="EC" id="2.1.1.77"/>
    </reaction>
</comment>
<comment type="subcellular location">
    <subcellularLocation>
        <location evidence="1">Cytoplasm</location>
    </subcellularLocation>
</comment>
<comment type="similarity">
    <text evidence="1">Belongs to the methyltransferase superfamily. L-isoaspartyl/D-aspartyl protein methyltransferase family.</text>
</comment>
<comment type="sequence caution" evidence="2">
    <conflict type="erroneous initiation">
        <sequence resource="EMBL-CDS" id="BAC89640"/>
    </conflict>
</comment>
<accession>Q7NJY2</accession>
<proteinExistence type="inferred from homology"/>
<reference key="1">
    <citation type="journal article" date="2003" name="DNA Res.">
        <title>Complete genome structure of Gloeobacter violaceus PCC 7421, a cyanobacterium that lacks thylakoids.</title>
        <authorList>
            <person name="Nakamura Y."/>
            <person name="Kaneko T."/>
            <person name="Sato S."/>
            <person name="Mimuro M."/>
            <person name="Miyashita H."/>
            <person name="Tsuchiya T."/>
            <person name="Sasamoto S."/>
            <person name="Watanabe A."/>
            <person name="Kawashima K."/>
            <person name="Kishida Y."/>
            <person name="Kiyokawa C."/>
            <person name="Kohara M."/>
            <person name="Matsumoto M."/>
            <person name="Matsuno A."/>
            <person name="Nakazaki N."/>
            <person name="Shimpo S."/>
            <person name="Takeuchi C."/>
            <person name="Yamada M."/>
            <person name="Tabata S."/>
        </authorList>
    </citation>
    <scope>NUCLEOTIDE SEQUENCE [LARGE SCALE GENOMIC DNA]</scope>
    <source>
        <strain>ATCC 29082 / PCC 7421</strain>
    </source>
</reference>
<evidence type="ECO:0000255" key="1">
    <source>
        <dbReference type="HAMAP-Rule" id="MF_00090"/>
    </source>
</evidence>
<evidence type="ECO:0000305" key="2"/>
<gene>
    <name evidence="1" type="primary">pcm</name>
    <name type="ordered locus">glr1699</name>
</gene>
<dbReference type="EC" id="2.1.1.77" evidence="1"/>
<dbReference type="EMBL" id="BA000045">
    <property type="protein sequence ID" value="BAC89640.1"/>
    <property type="status" value="ALT_INIT"/>
    <property type="molecule type" value="Genomic_DNA"/>
</dbReference>
<dbReference type="RefSeq" id="NP_924645.1">
    <property type="nucleotide sequence ID" value="NC_005125.1"/>
</dbReference>
<dbReference type="RefSeq" id="WP_011141698.1">
    <property type="nucleotide sequence ID" value="NC_005125.1"/>
</dbReference>
<dbReference type="SMR" id="Q7NJY2"/>
<dbReference type="STRING" id="251221.gene:10759190"/>
<dbReference type="EnsemblBacteria" id="BAC89640">
    <property type="protein sequence ID" value="BAC89640"/>
    <property type="gene ID" value="BAC89640"/>
</dbReference>
<dbReference type="KEGG" id="gvi:glr1699"/>
<dbReference type="PATRIC" id="fig|251221.4.peg.1730"/>
<dbReference type="eggNOG" id="COG2518">
    <property type="taxonomic scope" value="Bacteria"/>
</dbReference>
<dbReference type="HOGENOM" id="CLU_055432_2_0_3"/>
<dbReference type="InParanoid" id="Q7NJY2"/>
<dbReference type="OrthoDB" id="9772751at2"/>
<dbReference type="PhylomeDB" id="Q7NJY2"/>
<dbReference type="Proteomes" id="UP000000557">
    <property type="component" value="Chromosome"/>
</dbReference>
<dbReference type="GO" id="GO:0005737">
    <property type="term" value="C:cytoplasm"/>
    <property type="evidence" value="ECO:0000318"/>
    <property type="project" value="GO_Central"/>
</dbReference>
<dbReference type="GO" id="GO:0004719">
    <property type="term" value="F:protein-L-isoaspartate (D-aspartate) O-methyltransferase activity"/>
    <property type="evidence" value="ECO:0000318"/>
    <property type="project" value="GO_Central"/>
</dbReference>
<dbReference type="GO" id="GO:0032259">
    <property type="term" value="P:methylation"/>
    <property type="evidence" value="ECO:0007669"/>
    <property type="project" value="UniProtKB-KW"/>
</dbReference>
<dbReference type="GO" id="GO:0036211">
    <property type="term" value="P:protein modification process"/>
    <property type="evidence" value="ECO:0007669"/>
    <property type="project" value="UniProtKB-UniRule"/>
</dbReference>
<dbReference type="GO" id="GO:0030091">
    <property type="term" value="P:protein repair"/>
    <property type="evidence" value="ECO:0007669"/>
    <property type="project" value="UniProtKB-UniRule"/>
</dbReference>
<dbReference type="CDD" id="cd02440">
    <property type="entry name" value="AdoMet_MTases"/>
    <property type="match status" value="1"/>
</dbReference>
<dbReference type="FunFam" id="3.40.50.150:FF:000010">
    <property type="entry name" value="Protein-L-isoaspartate O-methyltransferase"/>
    <property type="match status" value="1"/>
</dbReference>
<dbReference type="Gene3D" id="3.40.50.150">
    <property type="entry name" value="Vaccinia Virus protein VP39"/>
    <property type="match status" value="1"/>
</dbReference>
<dbReference type="HAMAP" id="MF_00090">
    <property type="entry name" value="PIMT"/>
    <property type="match status" value="1"/>
</dbReference>
<dbReference type="InterPro" id="IPR000682">
    <property type="entry name" value="PCMT"/>
</dbReference>
<dbReference type="InterPro" id="IPR029063">
    <property type="entry name" value="SAM-dependent_MTases_sf"/>
</dbReference>
<dbReference type="NCBIfam" id="TIGR00080">
    <property type="entry name" value="pimt"/>
    <property type="match status" value="1"/>
</dbReference>
<dbReference type="NCBIfam" id="NF001453">
    <property type="entry name" value="PRK00312.1"/>
    <property type="match status" value="1"/>
</dbReference>
<dbReference type="PANTHER" id="PTHR11579">
    <property type="entry name" value="PROTEIN-L-ISOASPARTATE O-METHYLTRANSFERASE"/>
    <property type="match status" value="1"/>
</dbReference>
<dbReference type="PANTHER" id="PTHR11579:SF0">
    <property type="entry name" value="PROTEIN-L-ISOASPARTATE(D-ASPARTATE) O-METHYLTRANSFERASE"/>
    <property type="match status" value="1"/>
</dbReference>
<dbReference type="Pfam" id="PF01135">
    <property type="entry name" value="PCMT"/>
    <property type="match status" value="1"/>
</dbReference>
<dbReference type="SUPFAM" id="SSF53335">
    <property type="entry name" value="S-adenosyl-L-methionine-dependent methyltransferases"/>
    <property type="match status" value="1"/>
</dbReference>
<dbReference type="PROSITE" id="PS01279">
    <property type="entry name" value="PCMT"/>
    <property type="match status" value="1"/>
</dbReference>
<feature type="chain" id="PRO_0000111891" description="Protein-L-isoaspartate O-methyltransferase">
    <location>
        <begin position="1"/>
        <end position="205"/>
    </location>
</feature>
<feature type="active site" evidence="1">
    <location>
        <position position="52"/>
    </location>
</feature>
<organism>
    <name type="scientific">Gloeobacter violaceus (strain ATCC 29082 / PCC 7421)</name>
    <dbReference type="NCBI Taxonomy" id="251221"/>
    <lineage>
        <taxon>Bacteria</taxon>
        <taxon>Bacillati</taxon>
        <taxon>Cyanobacteriota</taxon>
        <taxon>Cyanophyceae</taxon>
        <taxon>Gloeobacterales</taxon>
        <taxon>Gloeobacteraceae</taxon>
        <taxon>Gloeobacter</taxon>
    </lineage>
</organism>
<keyword id="KW-0963">Cytoplasm</keyword>
<keyword id="KW-0489">Methyltransferase</keyword>
<keyword id="KW-1185">Reference proteome</keyword>
<keyword id="KW-0949">S-adenosyl-L-methionine</keyword>
<keyword id="KW-0808">Transferase</keyword>